<reference key="1">
    <citation type="submission" date="2008-10" db="EMBL/GenBank/DDBJ databases">
        <title>Genome sequence of Bacillus anthracis str. CDC 684.</title>
        <authorList>
            <person name="Dodson R.J."/>
            <person name="Munk A.C."/>
            <person name="Brettin T."/>
            <person name="Bruce D."/>
            <person name="Detter C."/>
            <person name="Tapia R."/>
            <person name="Han C."/>
            <person name="Sutton G."/>
            <person name="Sims D."/>
        </authorList>
    </citation>
    <scope>NUCLEOTIDE SEQUENCE [LARGE SCALE GENOMIC DNA]</scope>
    <source>
        <strain>CDC 684 / NRRL 3495</strain>
    </source>
</reference>
<organism>
    <name type="scientific">Bacillus anthracis (strain CDC 684 / NRRL 3495)</name>
    <dbReference type="NCBI Taxonomy" id="568206"/>
    <lineage>
        <taxon>Bacteria</taxon>
        <taxon>Bacillati</taxon>
        <taxon>Bacillota</taxon>
        <taxon>Bacilli</taxon>
        <taxon>Bacillales</taxon>
        <taxon>Bacillaceae</taxon>
        <taxon>Bacillus</taxon>
        <taxon>Bacillus cereus group</taxon>
    </lineage>
</organism>
<feature type="chain" id="PRO_1000165984" description="Large ribosomal subunit protein uL4">
    <location>
        <begin position="1"/>
        <end position="207"/>
    </location>
</feature>
<feature type="region of interest" description="Disordered" evidence="2">
    <location>
        <begin position="45"/>
        <end position="89"/>
    </location>
</feature>
<feature type="compositionally biased region" description="Basic residues" evidence="2">
    <location>
        <begin position="60"/>
        <end position="71"/>
    </location>
</feature>
<accession>C3LJ83</accession>
<sequence length="207" mass="22530">MPKVTVYNQTGSQVGEIELAEAIFGIEPNEAVLFEAVMMQRASLRQGTHKVKTRSEVRGGGRKPWRQKGTGRARQGSIRSPQWRGGGTVFGPTPRSYAYKLPKKVRRLAIKSALATKVVENNIVVLEDLVLNAPKTKDMLAVLKGLTVEKKALIVTADANESVELSARNIPGVTVITADGVNVLDVLHHDKLIMTKAAVEKVEEVLA</sequence>
<keyword id="KW-0687">Ribonucleoprotein</keyword>
<keyword id="KW-0689">Ribosomal protein</keyword>
<keyword id="KW-0694">RNA-binding</keyword>
<keyword id="KW-0699">rRNA-binding</keyword>
<protein>
    <recommendedName>
        <fullName evidence="1">Large ribosomal subunit protein uL4</fullName>
    </recommendedName>
    <alternativeName>
        <fullName evidence="3">50S ribosomal protein L4</fullName>
    </alternativeName>
</protein>
<comment type="function">
    <text evidence="1">One of the primary rRNA binding proteins, this protein initially binds near the 5'-end of the 23S rRNA. It is important during the early stages of 50S assembly. It makes multiple contacts with different domains of the 23S rRNA in the assembled 50S subunit and ribosome.</text>
</comment>
<comment type="function">
    <text evidence="1">Forms part of the polypeptide exit tunnel.</text>
</comment>
<comment type="subunit">
    <text evidence="1">Part of the 50S ribosomal subunit.</text>
</comment>
<comment type="similarity">
    <text evidence="1">Belongs to the universal ribosomal protein uL4 family.</text>
</comment>
<name>RL4_BACAC</name>
<dbReference type="EMBL" id="CP001215">
    <property type="protein sequence ID" value="ACP16515.1"/>
    <property type="molecule type" value="Genomic_DNA"/>
</dbReference>
<dbReference type="RefSeq" id="WP_001127258.1">
    <property type="nucleotide sequence ID" value="NC_012581.1"/>
</dbReference>
<dbReference type="SMR" id="C3LJ83"/>
<dbReference type="GeneID" id="93010942"/>
<dbReference type="KEGG" id="bah:BAMEG_0127"/>
<dbReference type="HOGENOM" id="CLU_041575_5_2_9"/>
<dbReference type="GO" id="GO:1990904">
    <property type="term" value="C:ribonucleoprotein complex"/>
    <property type="evidence" value="ECO:0007669"/>
    <property type="project" value="UniProtKB-KW"/>
</dbReference>
<dbReference type="GO" id="GO:0005840">
    <property type="term" value="C:ribosome"/>
    <property type="evidence" value="ECO:0007669"/>
    <property type="project" value="UniProtKB-KW"/>
</dbReference>
<dbReference type="GO" id="GO:0019843">
    <property type="term" value="F:rRNA binding"/>
    <property type="evidence" value="ECO:0007669"/>
    <property type="project" value="UniProtKB-UniRule"/>
</dbReference>
<dbReference type="GO" id="GO:0003735">
    <property type="term" value="F:structural constituent of ribosome"/>
    <property type="evidence" value="ECO:0007669"/>
    <property type="project" value="InterPro"/>
</dbReference>
<dbReference type="GO" id="GO:0006412">
    <property type="term" value="P:translation"/>
    <property type="evidence" value="ECO:0007669"/>
    <property type="project" value="UniProtKB-UniRule"/>
</dbReference>
<dbReference type="FunFam" id="3.40.1370.10:FF:000003">
    <property type="entry name" value="50S ribosomal protein L4"/>
    <property type="match status" value="1"/>
</dbReference>
<dbReference type="Gene3D" id="3.40.1370.10">
    <property type="match status" value="1"/>
</dbReference>
<dbReference type="HAMAP" id="MF_01328_B">
    <property type="entry name" value="Ribosomal_uL4_B"/>
    <property type="match status" value="1"/>
</dbReference>
<dbReference type="InterPro" id="IPR002136">
    <property type="entry name" value="Ribosomal_uL4"/>
</dbReference>
<dbReference type="InterPro" id="IPR013005">
    <property type="entry name" value="Ribosomal_uL4-like"/>
</dbReference>
<dbReference type="InterPro" id="IPR023574">
    <property type="entry name" value="Ribosomal_uL4_dom_sf"/>
</dbReference>
<dbReference type="NCBIfam" id="TIGR03953">
    <property type="entry name" value="rplD_bact"/>
    <property type="match status" value="1"/>
</dbReference>
<dbReference type="PANTHER" id="PTHR10746">
    <property type="entry name" value="50S RIBOSOMAL PROTEIN L4"/>
    <property type="match status" value="1"/>
</dbReference>
<dbReference type="PANTHER" id="PTHR10746:SF6">
    <property type="entry name" value="LARGE RIBOSOMAL SUBUNIT PROTEIN UL4M"/>
    <property type="match status" value="1"/>
</dbReference>
<dbReference type="Pfam" id="PF00573">
    <property type="entry name" value="Ribosomal_L4"/>
    <property type="match status" value="1"/>
</dbReference>
<dbReference type="SUPFAM" id="SSF52166">
    <property type="entry name" value="Ribosomal protein L4"/>
    <property type="match status" value="1"/>
</dbReference>
<proteinExistence type="inferred from homology"/>
<evidence type="ECO:0000255" key="1">
    <source>
        <dbReference type="HAMAP-Rule" id="MF_01328"/>
    </source>
</evidence>
<evidence type="ECO:0000256" key="2">
    <source>
        <dbReference type="SAM" id="MobiDB-lite"/>
    </source>
</evidence>
<evidence type="ECO:0000305" key="3"/>
<gene>
    <name evidence="1" type="primary">rplD</name>
    <name type="ordered locus">BAMEG_0127</name>
</gene>